<proteinExistence type="evidence at protein level"/>
<feature type="chain" id="PRO_0000209918" description="Guanosine-diphosphatase">
    <location>
        <begin position="1"/>
        <end position="556"/>
    </location>
</feature>
<feature type="topological domain" description="Cytoplasmic" evidence="2">
    <location>
        <begin position="1"/>
        <end position="12"/>
    </location>
</feature>
<feature type="transmembrane region" description="Helical; Signal-anchor for type II membrane protein" evidence="2">
    <location>
        <begin position="13"/>
        <end position="33"/>
    </location>
</feature>
<feature type="topological domain" description="Lumenal" evidence="2">
    <location>
        <begin position="34"/>
        <end position="556"/>
    </location>
</feature>
<feature type="active site" description="Proton acceptor" evidence="1">
    <location>
        <position position="256"/>
    </location>
</feature>
<feature type="glycosylation site" description="N-linked (GlcNAc...) asparagine" evidence="2">
    <location>
        <position position="372"/>
    </location>
</feature>
<reference key="1">
    <citation type="journal article" date="2003" name="FEMS Microbiol. Lett.">
        <title>Characterization of gdp1+ as encoding a GDPase in the fission yeast Schizosaccharomyces pombe.</title>
        <authorList>
            <person name="Sanchez R."/>
            <person name="Franco A."/>
            <person name="Gacto M."/>
            <person name="Notario V."/>
            <person name="Cansado J."/>
        </authorList>
    </citation>
    <scope>NUCLEOTIDE SEQUENCE [GENOMIC DNA]</scope>
    <scope>FUNCTION</scope>
    <scope>CATALYTIC ACTIVITY</scope>
    <scope>PATHWAY</scope>
    <scope>COFACTOR</scope>
    <scope>SUBCELLULAR LOCATION</scope>
    <source>
        <strain>972 / ATCC 24843</strain>
    </source>
</reference>
<reference key="2">
    <citation type="journal article" date="2002" name="Nature">
        <title>The genome sequence of Schizosaccharomyces pombe.</title>
        <authorList>
            <person name="Wood V."/>
            <person name="Gwilliam R."/>
            <person name="Rajandream M.A."/>
            <person name="Lyne M.H."/>
            <person name="Lyne R."/>
            <person name="Stewart A."/>
            <person name="Sgouros J.G."/>
            <person name="Peat N."/>
            <person name="Hayles J."/>
            <person name="Baker S.G."/>
            <person name="Basham D."/>
            <person name="Bowman S."/>
            <person name="Brooks K."/>
            <person name="Brown D."/>
            <person name="Brown S."/>
            <person name="Chillingworth T."/>
            <person name="Churcher C.M."/>
            <person name="Collins M."/>
            <person name="Connor R."/>
            <person name="Cronin A."/>
            <person name="Davis P."/>
            <person name="Feltwell T."/>
            <person name="Fraser A."/>
            <person name="Gentles S."/>
            <person name="Goble A."/>
            <person name="Hamlin N."/>
            <person name="Harris D.E."/>
            <person name="Hidalgo J."/>
            <person name="Hodgson G."/>
            <person name="Holroyd S."/>
            <person name="Hornsby T."/>
            <person name="Howarth S."/>
            <person name="Huckle E.J."/>
            <person name="Hunt S."/>
            <person name="Jagels K."/>
            <person name="James K.D."/>
            <person name="Jones L."/>
            <person name="Jones M."/>
            <person name="Leather S."/>
            <person name="McDonald S."/>
            <person name="McLean J."/>
            <person name="Mooney P."/>
            <person name="Moule S."/>
            <person name="Mungall K.L."/>
            <person name="Murphy L.D."/>
            <person name="Niblett D."/>
            <person name="Odell C."/>
            <person name="Oliver K."/>
            <person name="O'Neil S."/>
            <person name="Pearson D."/>
            <person name="Quail M.A."/>
            <person name="Rabbinowitsch E."/>
            <person name="Rutherford K.M."/>
            <person name="Rutter S."/>
            <person name="Saunders D."/>
            <person name="Seeger K."/>
            <person name="Sharp S."/>
            <person name="Skelton J."/>
            <person name="Simmonds M.N."/>
            <person name="Squares R."/>
            <person name="Squares S."/>
            <person name="Stevens K."/>
            <person name="Taylor K."/>
            <person name="Taylor R.G."/>
            <person name="Tivey A."/>
            <person name="Walsh S.V."/>
            <person name="Warren T."/>
            <person name="Whitehead S."/>
            <person name="Woodward J.R."/>
            <person name="Volckaert G."/>
            <person name="Aert R."/>
            <person name="Robben J."/>
            <person name="Grymonprez B."/>
            <person name="Weltjens I."/>
            <person name="Vanstreels E."/>
            <person name="Rieger M."/>
            <person name="Schaefer M."/>
            <person name="Mueller-Auer S."/>
            <person name="Gabel C."/>
            <person name="Fuchs M."/>
            <person name="Duesterhoeft A."/>
            <person name="Fritzc C."/>
            <person name="Holzer E."/>
            <person name="Moestl D."/>
            <person name="Hilbert H."/>
            <person name="Borzym K."/>
            <person name="Langer I."/>
            <person name="Beck A."/>
            <person name="Lehrach H."/>
            <person name="Reinhardt R."/>
            <person name="Pohl T.M."/>
            <person name="Eger P."/>
            <person name="Zimmermann W."/>
            <person name="Wedler H."/>
            <person name="Wambutt R."/>
            <person name="Purnelle B."/>
            <person name="Goffeau A."/>
            <person name="Cadieu E."/>
            <person name="Dreano S."/>
            <person name="Gloux S."/>
            <person name="Lelaure V."/>
            <person name="Mottier S."/>
            <person name="Galibert F."/>
            <person name="Aves S.J."/>
            <person name="Xiang Z."/>
            <person name="Hunt C."/>
            <person name="Moore K."/>
            <person name="Hurst S.M."/>
            <person name="Lucas M."/>
            <person name="Rochet M."/>
            <person name="Gaillardin C."/>
            <person name="Tallada V.A."/>
            <person name="Garzon A."/>
            <person name="Thode G."/>
            <person name="Daga R.R."/>
            <person name="Cruzado L."/>
            <person name="Jimenez J."/>
            <person name="Sanchez M."/>
            <person name="del Rey F."/>
            <person name="Benito J."/>
            <person name="Dominguez A."/>
            <person name="Revuelta J.L."/>
            <person name="Moreno S."/>
            <person name="Armstrong J."/>
            <person name="Forsburg S.L."/>
            <person name="Cerutti L."/>
            <person name="Lowe T."/>
            <person name="McCombie W.R."/>
            <person name="Paulsen I."/>
            <person name="Potashkin J."/>
            <person name="Shpakovski G.V."/>
            <person name="Ussery D."/>
            <person name="Barrell B.G."/>
            <person name="Nurse P."/>
        </authorList>
    </citation>
    <scope>NUCLEOTIDE SEQUENCE [LARGE SCALE GENOMIC DNA]</scope>
    <source>
        <strain>972 / ATCC 24843</strain>
    </source>
</reference>
<accession>Q9UT35</accession>
<protein>
    <recommendedName>
        <fullName>Guanosine-diphosphatase</fullName>
        <shortName>GDPase</shortName>
        <ecNumber evidence="3">3.6.1.42</ecNumber>
    </recommendedName>
</protein>
<sequence>MTPTMKSIARRKALLIALSIFAVTFILWNGFPGSSNRPLPSSNDEFHYEDIELPSGYRSEGEVVDLLNPKDELEEPLFSEEPLFPVTTSIPTKTAVSKPKIAPTSAAKDVTFSSSIDSDDCSVAYDNSKPVRQYVLMIDAGSTGSRVHVYQFNNCNPSPKLEEEFFKMIEPGLSSFAGDPEGAAASLDPLLDYAMENVPEEYRRCSPIAVKATAGLRLTGESEAKAILKSVRQHLENDYPFPIVKDGVSILEGSMEGIYAWITINYLLGTLGGKATHSTVAVMDLGGASTQLVFEPRFASDGESLVDGDHKYVLDYNGEQYELYQHSHLGYGLKEARKLIHKFVLNNAEALKESLELLGDSTSIIHPCLHLNASLTHPDSKSEASEVVFVGPSLAHLSLQCRGIAEKALYKDKNCPVRPCSFNGVHQPKFTETFTDSPIYLISYFYDRMISLGMPSTFTIEDMKYLANSVCSGPTYWQDAFSLTDALKELKEEPEWCLDLNYMISLLSVGYEIPNNRQLHTAKKIDNKELGWCLGASLSMLSEQNNGWNCNVKEEI</sequence>
<dbReference type="EC" id="3.6.1.42" evidence="3"/>
<dbReference type="EMBL" id="AF465240">
    <property type="protein sequence ID" value="AAL69974.1"/>
    <property type="molecule type" value="Genomic_DNA"/>
</dbReference>
<dbReference type="EMBL" id="CU329670">
    <property type="protein sequence ID" value="CAB57338.1"/>
    <property type="molecule type" value="Genomic_DNA"/>
</dbReference>
<dbReference type="PIR" id="T39109">
    <property type="entry name" value="T39109"/>
</dbReference>
<dbReference type="RefSeq" id="NP_593447.1">
    <property type="nucleotide sequence ID" value="NM_001018880.2"/>
</dbReference>
<dbReference type="SMR" id="Q9UT35"/>
<dbReference type="BioGRID" id="278325">
    <property type="interactions" value="23"/>
</dbReference>
<dbReference type="FunCoup" id="Q9UT35">
    <property type="interactions" value="217"/>
</dbReference>
<dbReference type="IntAct" id="Q9UT35">
    <property type="interactions" value="1"/>
</dbReference>
<dbReference type="STRING" id="284812.Q9UT35"/>
<dbReference type="GlyCosmos" id="Q9UT35">
    <property type="glycosylation" value="1 site, No reported glycans"/>
</dbReference>
<dbReference type="iPTMnet" id="Q9UT35"/>
<dbReference type="PaxDb" id="4896-SPAC824.08.1"/>
<dbReference type="DNASU" id="2541834"/>
<dbReference type="EnsemblFungi" id="SPAC824.08.1">
    <property type="protein sequence ID" value="SPAC824.08.1:pep"/>
    <property type="gene ID" value="SPAC824.08"/>
</dbReference>
<dbReference type="GeneID" id="2541834"/>
<dbReference type="KEGG" id="spo:2541834"/>
<dbReference type="PomBase" id="SPAC824.08"/>
<dbReference type="VEuPathDB" id="FungiDB:SPAC824.08"/>
<dbReference type="eggNOG" id="KOG1385">
    <property type="taxonomic scope" value="Eukaryota"/>
</dbReference>
<dbReference type="HOGENOM" id="CLU_010246_4_0_1"/>
<dbReference type="InParanoid" id="Q9UT35"/>
<dbReference type="OMA" id="WTCRIKE"/>
<dbReference type="PhylomeDB" id="Q9UT35"/>
<dbReference type="Reactome" id="R-SPO-8850843">
    <property type="pathway name" value="Phosphate bond hydrolysis by NTPDase proteins"/>
</dbReference>
<dbReference type="UniPathway" id="UPA00378"/>
<dbReference type="PRO" id="PR:Q9UT35"/>
<dbReference type="Proteomes" id="UP000002485">
    <property type="component" value="Chromosome I"/>
</dbReference>
<dbReference type="GO" id="GO:0005783">
    <property type="term" value="C:endoplasmic reticulum"/>
    <property type="evidence" value="ECO:0007005"/>
    <property type="project" value="PomBase"/>
</dbReference>
<dbReference type="GO" id="GO:0005794">
    <property type="term" value="C:Golgi apparatus"/>
    <property type="evidence" value="ECO:0000314"/>
    <property type="project" value="PomBase"/>
</dbReference>
<dbReference type="GO" id="GO:0000139">
    <property type="term" value="C:Golgi membrane"/>
    <property type="evidence" value="ECO:0007669"/>
    <property type="project" value="UniProtKB-SubCell"/>
</dbReference>
<dbReference type="GO" id="GO:0016020">
    <property type="term" value="C:membrane"/>
    <property type="evidence" value="ECO:0000318"/>
    <property type="project" value="GO_Central"/>
</dbReference>
<dbReference type="GO" id="GO:0004382">
    <property type="term" value="F:GDP phosphatase activity"/>
    <property type="evidence" value="ECO:0000314"/>
    <property type="project" value="PomBase"/>
</dbReference>
<dbReference type="GO" id="GO:0046872">
    <property type="term" value="F:metal ion binding"/>
    <property type="evidence" value="ECO:0007669"/>
    <property type="project" value="UniProtKB-KW"/>
</dbReference>
<dbReference type="GO" id="GO:0017111">
    <property type="term" value="F:ribonucleoside triphosphate phosphatase activity"/>
    <property type="evidence" value="ECO:0000318"/>
    <property type="project" value="GO_Central"/>
</dbReference>
<dbReference type="GO" id="GO:0045134">
    <property type="term" value="F:UDP phosphatase activity"/>
    <property type="evidence" value="ECO:0000314"/>
    <property type="project" value="PomBase"/>
</dbReference>
<dbReference type="GO" id="GO:0009134">
    <property type="term" value="P:nucleoside diphosphate catabolic process"/>
    <property type="evidence" value="ECO:0000318"/>
    <property type="project" value="GO_Central"/>
</dbReference>
<dbReference type="GO" id="GO:0006487">
    <property type="term" value="P:protein N-linked glycosylation"/>
    <property type="evidence" value="ECO:0000318"/>
    <property type="project" value="GO_Central"/>
</dbReference>
<dbReference type="GO" id="GO:0018279">
    <property type="term" value="P:protein N-linked glycosylation via asparagine"/>
    <property type="evidence" value="ECO:0000315"/>
    <property type="project" value="PomBase"/>
</dbReference>
<dbReference type="CDD" id="cd24040">
    <property type="entry name" value="ASKHA_NBD_GDA1"/>
    <property type="match status" value="1"/>
</dbReference>
<dbReference type="Gene3D" id="3.30.420.40">
    <property type="match status" value="1"/>
</dbReference>
<dbReference type="Gene3D" id="3.30.420.150">
    <property type="entry name" value="Exopolyphosphatase. Domain 2"/>
    <property type="match status" value="1"/>
</dbReference>
<dbReference type="InterPro" id="IPR000407">
    <property type="entry name" value="GDA1_CD39_NTPase"/>
</dbReference>
<dbReference type="PANTHER" id="PTHR11782">
    <property type="entry name" value="ADENOSINE/GUANOSINE DIPHOSPHATASE"/>
    <property type="match status" value="1"/>
</dbReference>
<dbReference type="PANTHER" id="PTHR11782:SF83">
    <property type="entry name" value="GUANOSINE-DIPHOSPHATASE"/>
    <property type="match status" value="1"/>
</dbReference>
<dbReference type="Pfam" id="PF01150">
    <property type="entry name" value="GDA1_CD39"/>
    <property type="match status" value="1"/>
</dbReference>
<dbReference type="PROSITE" id="PS01238">
    <property type="entry name" value="GDA1_CD39_NTPASE"/>
    <property type="match status" value="1"/>
</dbReference>
<keyword id="KW-0106">Calcium</keyword>
<keyword id="KW-0325">Glycoprotein</keyword>
<keyword id="KW-0333">Golgi apparatus</keyword>
<keyword id="KW-0378">Hydrolase</keyword>
<keyword id="KW-0464">Manganese</keyword>
<keyword id="KW-0472">Membrane</keyword>
<keyword id="KW-0479">Metal-binding</keyword>
<keyword id="KW-1185">Reference proteome</keyword>
<keyword id="KW-0735">Signal-anchor</keyword>
<keyword id="KW-0812">Transmembrane</keyword>
<keyword id="KW-1133">Transmembrane helix</keyword>
<evidence type="ECO:0000250" key="1"/>
<evidence type="ECO:0000255" key="2"/>
<evidence type="ECO:0000269" key="3">
    <source>
    </source>
</evidence>
<evidence type="ECO:0000305" key="4"/>
<evidence type="ECO:0000305" key="5">
    <source>
    </source>
</evidence>
<organism>
    <name type="scientific">Schizosaccharomyces pombe (strain 972 / ATCC 24843)</name>
    <name type="common">Fission yeast</name>
    <dbReference type="NCBI Taxonomy" id="284812"/>
    <lineage>
        <taxon>Eukaryota</taxon>
        <taxon>Fungi</taxon>
        <taxon>Dikarya</taxon>
        <taxon>Ascomycota</taxon>
        <taxon>Taphrinomycotina</taxon>
        <taxon>Schizosaccharomycetes</taxon>
        <taxon>Schizosaccharomycetales</taxon>
        <taxon>Schizosaccharomycetaceae</taxon>
        <taxon>Schizosaccharomyces</taxon>
    </lineage>
</organism>
<gene>
    <name type="primary">gdp1</name>
    <name type="ORF">SPAC824.08</name>
</gene>
<name>GDA1_SCHPO</name>
<comment type="function">
    <text evidence="3">After transfer of sugars to endogenous macromolecular acceptors, the enzyme converts nucleoside diphosphates to nucleoside monophosphates which in turn exit the Golgi lumen in a coupled antiporter reaction, allowing entry of additional nucleotide sugar from the cytosol.</text>
</comment>
<comment type="catalytic activity">
    <reaction evidence="3">
        <text>GDP + H2O = GMP + phosphate + H(+)</text>
        <dbReference type="Rhea" id="RHEA:22156"/>
        <dbReference type="ChEBI" id="CHEBI:15377"/>
        <dbReference type="ChEBI" id="CHEBI:15378"/>
        <dbReference type="ChEBI" id="CHEBI:43474"/>
        <dbReference type="ChEBI" id="CHEBI:58115"/>
        <dbReference type="ChEBI" id="CHEBI:58189"/>
        <dbReference type="EC" id="3.6.1.42"/>
    </reaction>
    <physiologicalReaction direction="left-to-right" evidence="5">
        <dbReference type="Rhea" id="RHEA:22157"/>
    </physiologicalReaction>
</comment>
<comment type="cofactor">
    <cofactor evidence="3">
        <name>Ca(2+)</name>
        <dbReference type="ChEBI" id="CHEBI:29108"/>
    </cofactor>
</comment>
<comment type="cofactor">
    <cofactor evidence="3">
        <name>Mn(2+)</name>
        <dbReference type="ChEBI" id="CHEBI:29035"/>
    </cofactor>
</comment>
<comment type="pathway">
    <text evidence="3">Protein modification; protein glycosylation.</text>
</comment>
<comment type="subcellular location">
    <subcellularLocation>
        <location evidence="3">Golgi apparatus membrane</location>
        <topology evidence="3">Single-pass type II membrane protein</topology>
    </subcellularLocation>
</comment>
<comment type="similarity">
    <text evidence="4">Belongs to the GDA1/CD39 NTPase family.</text>
</comment>